<protein>
    <recommendedName>
        <fullName evidence="1">Methylglyoxal synthase</fullName>
        <shortName evidence="1">MGS</shortName>
        <ecNumber evidence="1">4.2.3.3</ecNumber>
    </recommendedName>
</protein>
<organism>
    <name type="scientific">Clostridium beijerinckii (strain ATCC 51743 / NCIMB 8052)</name>
    <name type="common">Clostridium acetobutylicum</name>
    <dbReference type="NCBI Taxonomy" id="290402"/>
    <lineage>
        <taxon>Bacteria</taxon>
        <taxon>Bacillati</taxon>
        <taxon>Bacillota</taxon>
        <taxon>Clostridia</taxon>
        <taxon>Eubacteriales</taxon>
        <taxon>Clostridiaceae</taxon>
        <taxon>Clostridium</taxon>
    </lineage>
</organism>
<keyword id="KW-0456">Lyase</keyword>
<reference key="1">
    <citation type="submission" date="2007-06" db="EMBL/GenBank/DDBJ databases">
        <title>Complete sequence of Clostridium beijerinckii NCIMB 8052.</title>
        <authorList>
            <consortium name="US DOE Joint Genome Institute"/>
            <person name="Copeland A."/>
            <person name="Lucas S."/>
            <person name="Lapidus A."/>
            <person name="Barry K."/>
            <person name="Detter J.C."/>
            <person name="Glavina del Rio T."/>
            <person name="Hammon N."/>
            <person name="Israni S."/>
            <person name="Dalin E."/>
            <person name="Tice H."/>
            <person name="Pitluck S."/>
            <person name="Sims D."/>
            <person name="Brettin T."/>
            <person name="Bruce D."/>
            <person name="Tapia R."/>
            <person name="Brainard J."/>
            <person name="Schmutz J."/>
            <person name="Larimer F."/>
            <person name="Land M."/>
            <person name="Hauser L."/>
            <person name="Kyrpides N."/>
            <person name="Mikhailova N."/>
            <person name="Bennet G."/>
            <person name="Cann I."/>
            <person name="Chen J.-S."/>
            <person name="Contreras A.L."/>
            <person name="Jones D."/>
            <person name="Kashket E."/>
            <person name="Mitchell W."/>
            <person name="Stoddard S."/>
            <person name="Schwarz W."/>
            <person name="Qureshi N."/>
            <person name="Young M."/>
            <person name="Shi Z."/>
            <person name="Ezeji T."/>
            <person name="White B."/>
            <person name="Blaschek H."/>
            <person name="Richardson P."/>
        </authorList>
    </citation>
    <scope>NUCLEOTIDE SEQUENCE [LARGE SCALE GENOMIC DNA]</scope>
    <source>
        <strain>ATCC 51743 / NCIMB 8052</strain>
    </source>
</reference>
<feature type="chain" id="PRO_1000211977" description="Methylglyoxal synthase">
    <location>
        <begin position="1"/>
        <end position="119"/>
    </location>
</feature>
<feature type="domain" description="MGS-like" evidence="1">
    <location>
        <begin position="1"/>
        <end position="119"/>
    </location>
</feature>
<feature type="active site" description="Proton donor/acceptor" evidence="1">
    <location>
        <position position="60"/>
    </location>
</feature>
<feature type="binding site" evidence="1">
    <location>
        <position position="8"/>
    </location>
    <ligand>
        <name>substrate</name>
    </ligand>
</feature>
<feature type="binding site" evidence="1">
    <location>
        <position position="12"/>
    </location>
    <ligand>
        <name>substrate</name>
    </ligand>
</feature>
<feature type="binding site" evidence="1">
    <location>
        <begin position="34"/>
        <end position="37"/>
    </location>
    <ligand>
        <name>substrate</name>
    </ligand>
</feature>
<feature type="binding site" evidence="1">
    <location>
        <begin position="54"/>
        <end position="55"/>
    </location>
    <ligand>
        <name>substrate</name>
    </ligand>
</feature>
<feature type="binding site" evidence="1">
    <location>
        <position position="87"/>
    </location>
    <ligand>
        <name>substrate</name>
    </ligand>
</feature>
<accession>A6LPD6</accession>
<proteinExistence type="inferred from homology"/>
<gene>
    <name evidence="1" type="primary">mgsA</name>
    <name type="ordered locus">Cbei_0026</name>
</gene>
<sequence>MKIALIAHDKKKEDIIEFSKKYKDVLAKYELVATGTTGTKISEATGLEVKRYLSGPYGGDQQLGGRIAEGKIDLVIFFTDPLTAQPHEPDVSALLRVCNVHNVAVVTNIKTAELIIKQF</sequence>
<comment type="function">
    <text evidence="1">Catalyzes the formation of methylglyoxal from dihydroxyacetone phosphate.</text>
</comment>
<comment type="catalytic activity">
    <reaction evidence="1">
        <text>dihydroxyacetone phosphate = methylglyoxal + phosphate</text>
        <dbReference type="Rhea" id="RHEA:17937"/>
        <dbReference type="ChEBI" id="CHEBI:17158"/>
        <dbReference type="ChEBI" id="CHEBI:43474"/>
        <dbReference type="ChEBI" id="CHEBI:57642"/>
        <dbReference type="EC" id="4.2.3.3"/>
    </reaction>
</comment>
<comment type="similarity">
    <text evidence="1">Belongs to the methylglyoxal synthase family.</text>
</comment>
<name>MGSA_CLOB8</name>
<evidence type="ECO:0000255" key="1">
    <source>
        <dbReference type="HAMAP-Rule" id="MF_00549"/>
    </source>
</evidence>
<dbReference type="EC" id="4.2.3.3" evidence="1"/>
<dbReference type="EMBL" id="CP000721">
    <property type="protein sequence ID" value="ABR32216.1"/>
    <property type="molecule type" value="Genomic_DNA"/>
</dbReference>
<dbReference type="RefSeq" id="WP_011967391.1">
    <property type="nucleotide sequence ID" value="NC_009617.1"/>
</dbReference>
<dbReference type="SMR" id="A6LPD6"/>
<dbReference type="GeneID" id="66342894"/>
<dbReference type="KEGG" id="cbe:Cbei_0026"/>
<dbReference type="eggNOG" id="COG1803">
    <property type="taxonomic scope" value="Bacteria"/>
</dbReference>
<dbReference type="HOGENOM" id="CLU_120420_1_0_9"/>
<dbReference type="Proteomes" id="UP000000565">
    <property type="component" value="Chromosome"/>
</dbReference>
<dbReference type="GO" id="GO:0005829">
    <property type="term" value="C:cytosol"/>
    <property type="evidence" value="ECO:0007669"/>
    <property type="project" value="TreeGrafter"/>
</dbReference>
<dbReference type="GO" id="GO:0008929">
    <property type="term" value="F:methylglyoxal synthase activity"/>
    <property type="evidence" value="ECO:0007669"/>
    <property type="project" value="UniProtKB-UniRule"/>
</dbReference>
<dbReference type="GO" id="GO:0019242">
    <property type="term" value="P:methylglyoxal biosynthetic process"/>
    <property type="evidence" value="ECO:0007669"/>
    <property type="project" value="UniProtKB-UniRule"/>
</dbReference>
<dbReference type="CDD" id="cd01422">
    <property type="entry name" value="MGS"/>
    <property type="match status" value="1"/>
</dbReference>
<dbReference type="Gene3D" id="3.40.50.1380">
    <property type="entry name" value="Methylglyoxal synthase-like domain"/>
    <property type="match status" value="1"/>
</dbReference>
<dbReference type="HAMAP" id="MF_00549">
    <property type="entry name" value="Methylglyoxal_synth"/>
    <property type="match status" value="1"/>
</dbReference>
<dbReference type="InterPro" id="IPR004363">
    <property type="entry name" value="Methylgl_synth"/>
</dbReference>
<dbReference type="InterPro" id="IPR018148">
    <property type="entry name" value="Methylglyoxal_synth_AS"/>
</dbReference>
<dbReference type="InterPro" id="IPR011607">
    <property type="entry name" value="MGS-like_dom"/>
</dbReference>
<dbReference type="InterPro" id="IPR036914">
    <property type="entry name" value="MGS-like_dom_sf"/>
</dbReference>
<dbReference type="NCBIfam" id="TIGR00160">
    <property type="entry name" value="MGSA"/>
    <property type="match status" value="1"/>
</dbReference>
<dbReference type="NCBIfam" id="NF003559">
    <property type="entry name" value="PRK05234.1"/>
    <property type="match status" value="1"/>
</dbReference>
<dbReference type="PANTHER" id="PTHR30492">
    <property type="entry name" value="METHYLGLYOXAL SYNTHASE"/>
    <property type="match status" value="1"/>
</dbReference>
<dbReference type="PANTHER" id="PTHR30492:SF0">
    <property type="entry name" value="METHYLGLYOXAL SYNTHASE"/>
    <property type="match status" value="1"/>
</dbReference>
<dbReference type="Pfam" id="PF02142">
    <property type="entry name" value="MGS"/>
    <property type="match status" value="1"/>
</dbReference>
<dbReference type="PIRSF" id="PIRSF006614">
    <property type="entry name" value="Methylglyox_syn"/>
    <property type="match status" value="1"/>
</dbReference>
<dbReference type="SMART" id="SM00851">
    <property type="entry name" value="MGS"/>
    <property type="match status" value="1"/>
</dbReference>
<dbReference type="SUPFAM" id="SSF52335">
    <property type="entry name" value="Methylglyoxal synthase-like"/>
    <property type="match status" value="1"/>
</dbReference>
<dbReference type="PROSITE" id="PS01335">
    <property type="entry name" value="METHYLGLYOXAL_SYNTH"/>
    <property type="match status" value="1"/>
</dbReference>
<dbReference type="PROSITE" id="PS51855">
    <property type="entry name" value="MGS"/>
    <property type="match status" value="1"/>
</dbReference>